<name>GSHB_BRUME</name>
<feature type="chain" id="PRO_0000197457" description="Glutathione synthetase">
    <location>
        <begin position="1"/>
        <end position="312"/>
    </location>
</feature>
<feature type="domain" description="ATP-grasp" evidence="2">
    <location>
        <begin position="125"/>
        <end position="309"/>
    </location>
</feature>
<feature type="binding site" evidence="2">
    <location>
        <begin position="151"/>
        <end position="207"/>
    </location>
    <ligand>
        <name>ATP</name>
        <dbReference type="ChEBI" id="CHEBI:30616"/>
    </ligand>
</feature>
<feature type="binding site" evidence="2">
    <location>
        <position position="280"/>
    </location>
    <ligand>
        <name>Mg(2+)</name>
        <dbReference type="ChEBI" id="CHEBI:18420"/>
    </ligand>
</feature>
<feature type="binding site" evidence="2">
    <location>
        <position position="282"/>
    </location>
    <ligand>
        <name>Mg(2+)</name>
        <dbReference type="ChEBI" id="CHEBI:18420"/>
    </ligand>
</feature>
<protein>
    <recommendedName>
        <fullName evidence="2">Glutathione synthetase</fullName>
        <ecNumber evidence="2">6.3.2.3</ecNumber>
    </recommendedName>
    <alternativeName>
        <fullName evidence="2">GSH synthetase</fullName>
        <shortName evidence="2">GSH-S</shortName>
        <shortName evidence="2">GSHase</shortName>
    </alternativeName>
    <alternativeName>
        <fullName evidence="2">Glutathione synthase</fullName>
    </alternativeName>
</protein>
<comment type="catalytic activity">
    <reaction evidence="2">
        <text>gamma-L-glutamyl-L-cysteine + glycine + ATP = glutathione + ADP + phosphate + H(+)</text>
        <dbReference type="Rhea" id="RHEA:13557"/>
        <dbReference type="ChEBI" id="CHEBI:15378"/>
        <dbReference type="ChEBI" id="CHEBI:30616"/>
        <dbReference type="ChEBI" id="CHEBI:43474"/>
        <dbReference type="ChEBI" id="CHEBI:57305"/>
        <dbReference type="ChEBI" id="CHEBI:57925"/>
        <dbReference type="ChEBI" id="CHEBI:58173"/>
        <dbReference type="ChEBI" id="CHEBI:456216"/>
        <dbReference type="EC" id="6.3.2.3"/>
    </reaction>
</comment>
<comment type="cofactor">
    <cofactor evidence="1">
        <name>Mg(2+)</name>
        <dbReference type="ChEBI" id="CHEBI:18420"/>
    </cofactor>
    <cofactor evidence="1">
        <name>Mn(2+)</name>
        <dbReference type="ChEBI" id="CHEBI:29035"/>
    </cofactor>
    <text evidence="1">Binds 1 Mg(2+) or Mn(2+) ion per subunit.</text>
</comment>
<comment type="pathway">
    <text evidence="2">Sulfur metabolism; glutathione biosynthesis; glutathione from L-cysteine and L-glutamate: step 2/2.</text>
</comment>
<comment type="similarity">
    <text evidence="2">Belongs to the prokaryotic GSH synthase family.</text>
</comment>
<proteinExistence type="inferred from homology"/>
<keyword id="KW-0067">ATP-binding</keyword>
<keyword id="KW-0317">Glutathione biosynthesis</keyword>
<keyword id="KW-0436">Ligase</keyword>
<keyword id="KW-0460">Magnesium</keyword>
<keyword id="KW-0464">Manganese</keyword>
<keyword id="KW-0479">Metal-binding</keyword>
<keyword id="KW-0547">Nucleotide-binding</keyword>
<reference key="1">
    <citation type="journal article" date="2002" name="Proc. Natl. Acad. Sci. U.S.A.">
        <title>The genome sequence of the facultative intracellular pathogen Brucella melitensis.</title>
        <authorList>
            <person name="DelVecchio V.G."/>
            <person name="Kapatral V."/>
            <person name="Redkar R.J."/>
            <person name="Patra G."/>
            <person name="Mujer C."/>
            <person name="Los T."/>
            <person name="Ivanova N."/>
            <person name="Anderson I."/>
            <person name="Bhattacharyya A."/>
            <person name="Lykidis A."/>
            <person name="Reznik G."/>
            <person name="Jablonski L."/>
            <person name="Larsen N."/>
            <person name="D'Souza M."/>
            <person name="Bernal A."/>
            <person name="Mazur M."/>
            <person name="Goltsman E."/>
            <person name="Selkov E."/>
            <person name="Elzer P.H."/>
            <person name="Hagius S."/>
            <person name="O'Callaghan D."/>
            <person name="Letesson J.-J."/>
            <person name="Haselkorn R."/>
            <person name="Kyrpides N.C."/>
            <person name="Overbeek R."/>
        </authorList>
    </citation>
    <scope>NUCLEOTIDE SEQUENCE [LARGE SCALE GENOMIC DNA]</scope>
    <source>
        <strain>ATCC 23456 / CCUG 17765 / NCTC 10094 / 16M</strain>
    </source>
</reference>
<dbReference type="EC" id="6.3.2.3" evidence="2"/>
<dbReference type="EMBL" id="AE008917">
    <property type="protein sequence ID" value="AAL53177.1"/>
    <property type="molecule type" value="Genomic_DNA"/>
</dbReference>
<dbReference type="PIR" id="AF3501">
    <property type="entry name" value="AF3501"/>
</dbReference>
<dbReference type="RefSeq" id="WP_004684568.1">
    <property type="nucleotide sequence ID" value="NZ_GG703778.1"/>
</dbReference>
<dbReference type="SMR" id="Q8YE82"/>
<dbReference type="GeneID" id="29594884"/>
<dbReference type="KEGG" id="bme:BMEI1996"/>
<dbReference type="KEGG" id="bmel:DK63_1495"/>
<dbReference type="PATRIC" id="fig|224914.52.peg.1576"/>
<dbReference type="eggNOG" id="COG0189">
    <property type="taxonomic scope" value="Bacteria"/>
</dbReference>
<dbReference type="UniPathway" id="UPA00142">
    <property type="reaction ID" value="UER00210"/>
</dbReference>
<dbReference type="Proteomes" id="UP000000419">
    <property type="component" value="Chromosome I"/>
</dbReference>
<dbReference type="GO" id="GO:0005737">
    <property type="term" value="C:cytoplasm"/>
    <property type="evidence" value="ECO:0007669"/>
    <property type="project" value="TreeGrafter"/>
</dbReference>
<dbReference type="GO" id="GO:0005524">
    <property type="term" value="F:ATP binding"/>
    <property type="evidence" value="ECO:0007669"/>
    <property type="project" value="UniProtKB-UniRule"/>
</dbReference>
<dbReference type="GO" id="GO:0004363">
    <property type="term" value="F:glutathione synthase activity"/>
    <property type="evidence" value="ECO:0007669"/>
    <property type="project" value="UniProtKB-UniRule"/>
</dbReference>
<dbReference type="GO" id="GO:0046872">
    <property type="term" value="F:metal ion binding"/>
    <property type="evidence" value="ECO:0007669"/>
    <property type="project" value="UniProtKB-KW"/>
</dbReference>
<dbReference type="Gene3D" id="3.40.50.20">
    <property type="match status" value="1"/>
</dbReference>
<dbReference type="Gene3D" id="3.30.1490.20">
    <property type="entry name" value="ATP-grasp fold, A domain"/>
    <property type="match status" value="1"/>
</dbReference>
<dbReference type="Gene3D" id="3.30.470.20">
    <property type="entry name" value="ATP-grasp fold, B domain"/>
    <property type="match status" value="1"/>
</dbReference>
<dbReference type="HAMAP" id="MF_00162">
    <property type="entry name" value="GSH_S"/>
    <property type="match status" value="1"/>
</dbReference>
<dbReference type="InterPro" id="IPR011761">
    <property type="entry name" value="ATP-grasp"/>
</dbReference>
<dbReference type="InterPro" id="IPR013815">
    <property type="entry name" value="ATP_grasp_subdomain_1"/>
</dbReference>
<dbReference type="InterPro" id="IPR006284">
    <property type="entry name" value="Glut_synth_pro"/>
</dbReference>
<dbReference type="InterPro" id="IPR004218">
    <property type="entry name" value="GSHS_ATP-bd"/>
</dbReference>
<dbReference type="InterPro" id="IPR004215">
    <property type="entry name" value="GSHS_N"/>
</dbReference>
<dbReference type="InterPro" id="IPR016185">
    <property type="entry name" value="PreATP-grasp_dom_sf"/>
</dbReference>
<dbReference type="NCBIfam" id="TIGR01380">
    <property type="entry name" value="glut_syn"/>
    <property type="match status" value="1"/>
</dbReference>
<dbReference type="NCBIfam" id="NF003573">
    <property type="entry name" value="PRK05246.1"/>
    <property type="match status" value="1"/>
</dbReference>
<dbReference type="PANTHER" id="PTHR21621:SF4">
    <property type="entry name" value="GLUTATHIONE SYNTHETASE"/>
    <property type="match status" value="1"/>
</dbReference>
<dbReference type="PANTHER" id="PTHR21621">
    <property type="entry name" value="RIBOSOMAL PROTEIN S6 MODIFICATION PROTEIN"/>
    <property type="match status" value="1"/>
</dbReference>
<dbReference type="Pfam" id="PF02955">
    <property type="entry name" value="GSH-S_ATP"/>
    <property type="match status" value="1"/>
</dbReference>
<dbReference type="Pfam" id="PF02951">
    <property type="entry name" value="GSH-S_N"/>
    <property type="match status" value="1"/>
</dbReference>
<dbReference type="SUPFAM" id="SSF56059">
    <property type="entry name" value="Glutathione synthetase ATP-binding domain-like"/>
    <property type="match status" value="1"/>
</dbReference>
<dbReference type="SUPFAM" id="SSF52440">
    <property type="entry name" value="PreATP-grasp domain"/>
    <property type="match status" value="1"/>
</dbReference>
<dbReference type="PROSITE" id="PS50975">
    <property type="entry name" value="ATP_GRASP"/>
    <property type="match status" value="1"/>
</dbReference>
<organism>
    <name type="scientific">Brucella melitensis biotype 1 (strain ATCC 23456 / CCUG 17765 / NCTC 10094 / 16M)</name>
    <dbReference type="NCBI Taxonomy" id="224914"/>
    <lineage>
        <taxon>Bacteria</taxon>
        <taxon>Pseudomonadati</taxon>
        <taxon>Pseudomonadota</taxon>
        <taxon>Alphaproteobacteria</taxon>
        <taxon>Hyphomicrobiales</taxon>
        <taxon>Brucellaceae</taxon>
        <taxon>Brucella/Ochrobactrum group</taxon>
        <taxon>Brucella</taxon>
    </lineage>
</organism>
<evidence type="ECO:0000250" key="1"/>
<evidence type="ECO:0000255" key="2">
    <source>
        <dbReference type="HAMAP-Rule" id="MF_00162"/>
    </source>
</evidence>
<gene>
    <name evidence="2" type="primary">gshB</name>
    <name type="ordered locus">BMEI1996</name>
</gene>
<accession>Q8YE82</accession>
<sequence length="312" mass="35446">MALKVAVQMDHISTVNITGDTTFALSLEAQKRGHELFHYTPDWLSMRDGVVSARVEKMEVRDVKGDHYTLGEPVRRDLTEMDVILLRQDPPFDMNYITTTHLLERIHPKTLVVNDPTWVRNSPEKIFVTEFPDLMPETLITKDPQEVMDFRREFGDIILKPLYGNGGAGVFHLADGDRNLTSLLEMFGQLFREPFIAQRYLKDVRAGDKRIILIDGEPVGALNRVPSETDARSNMHVGGRPEQSKLTPREREICARIGPSLKERGFILVGIDVIGDYMTEINVTSPTGIREIERFDGTNIAALFWDAVEARR</sequence>